<proteinExistence type="evidence at protein level"/>
<organism>
    <name type="scientific">Saccharomyces cerevisiae (strain ATCC 204508 / S288c)</name>
    <name type="common">Baker's yeast</name>
    <dbReference type="NCBI Taxonomy" id="559292"/>
    <lineage>
        <taxon>Eukaryota</taxon>
        <taxon>Fungi</taxon>
        <taxon>Dikarya</taxon>
        <taxon>Ascomycota</taxon>
        <taxon>Saccharomycotina</taxon>
        <taxon>Saccharomycetes</taxon>
        <taxon>Saccharomycetales</taxon>
        <taxon>Saccharomycetaceae</taxon>
        <taxon>Saccharomyces</taxon>
    </lineage>
</organism>
<protein>
    <recommendedName>
        <fullName>Probable endonuclease LCL3</fullName>
        <ecNumber>3.1.-.-</ecNumber>
    </recommendedName>
    <alternativeName>
        <fullName>Long chronological lifespan protein 3</fullName>
    </alternativeName>
</protein>
<sequence length="274" mass="32112">MREGDSNSKKSADVAVLSIILTGSTLTLIYTYKRYLTQFKRTNDIPRRIFRKHWLYGKVTSVGDGDNFHFFHMPGGIRGGWGWLRPVPQMIKNDSTAEKLVGDSRNMRFFNFNWITHGRSTKSKIQKAKSQFLKLNVPYKNRKNLPTIPIRLCGIDAPERAHFGNPAQPFGNEALIWLQNRILGKKVWVKPLSIDQYNRCVARVSYWDWFGGWKDLSLEMLKDGLAVVYEGKVNTEFDDREDKYRYYEFLARSRKKGLWIQNKFETPGEYKKRI</sequence>
<dbReference type="EC" id="3.1.-.-"/>
<dbReference type="EMBL" id="Z72607">
    <property type="protein sequence ID" value="CAA96790.1"/>
    <property type="molecule type" value="Genomic_DNA"/>
</dbReference>
<dbReference type="EMBL" id="BK006941">
    <property type="protein sequence ID" value="DAA08020.1"/>
    <property type="molecule type" value="Genomic_DNA"/>
</dbReference>
<dbReference type="PIR" id="S64092">
    <property type="entry name" value="S64092"/>
</dbReference>
<dbReference type="RefSeq" id="NP_011430.1">
    <property type="nucleotide sequence ID" value="NM_001180950.1"/>
</dbReference>
<dbReference type="BioGRID" id="33165">
    <property type="interactions" value="36"/>
</dbReference>
<dbReference type="FunCoup" id="P53153">
    <property type="interactions" value="29"/>
</dbReference>
<dbReference type="IntAct" id="P53153">
    <property type="interactions" value="3"/>
</dbReference>
<dbReference type="MINT" id="P53153"/>
<dbReference type="STRING" id="4932.YGL085W"/>
<dbReference type="iPTMnet" id="P53153"/>
<dbReference type="PaxDb" id="4932-YGL085W"/>
<dbReference type="PeptideAtlas" id="P53153"/>
<dbReference type="EnsemblFungi" id="YGL085W_mRNA">
    <property type="protein sequence ID" value="YGL085W"/>
    <property type="gene ID" value="YGL085W"/>
</dbReference>
<dbReference type="GeneID" id="852795"/>
<dbReference type="KEGG" id="sce:YGL085W"/>
<dbReference type="AGR" id="SGD:S000003053"/>
<dbReference type="SGD" id="S000003053">
    <property type="gene designation" value="LCL3"/>
</dbReference>
<dbReference type="VEuPathDB" id="FungiDB:YGL085W"/>
<dbReference type="eggNOG" id="ENOG502S1U4">
    <property type="taxonomic scope" value="Eukaryota"/>
</dbReference>
<dbReference type="HOGENOM" id="CLU_046484_0_1_1"/>
<dbReference type="InParanoid" id="P53153"/>
<dbReference type="OMA" id="IYHTPGG"/>
<dbReference type="OrthoDB" id="430293at2759"/>
<dbReference type="BioCyc" id="YEAST:G3O-30586-MONOMER"/>
<dbReference type="BioGRID-ORCS" id="852795">
    <property type="hits" value="0 hits in 10 CRISPR screens"/>
</dbReference>
<dbReference type="PRO" id="PR:P53153"/>
<dbReference type="Proteomes" id="UP000002311">
    <property type="component" value="Chromosome VII"/>
</dbReference>
<dbReference type="RNAct" id="P53153">
    <property type="molecule type" value="protein"/>
</dbReference>
<dbReference type="GO" id="GO:0016020">
    <property type="term" value="C:membrane"/>
    <property type="evidence" value="ECO:0007669"/>
    <property type="project" value="UniProtKB-SubCell"/>
</dbReference>
<dbReference type="GO" id="GO:0005739">
    <property type="term" value="C:mitochondrion"/>
    <property type="evidence" value="ECO:0007005"/>
    <property type="project" value="SGD"/>
</dbReference>
<dbReference type="GO" id="GO:0004519">
    <property type="term" value="F:endonuclease activity"/>
    <property type="evidence" value="ECO:0007669"/>
    <property type="project" value="UniProtKB-KW"/>
</dbReference>
<dbReference type="GO" id="GO:0046872">
    <property type="term" value="F:metal ion binding"/>
    <property type="evidence" value="ECO:0007669"/>
    <property type="project" value="UniProtKB-KW"/>
</dbReference>
<dbReference type="Gene3D" id="2.40.50.90">
    <property type="match status" value="1"/>
</dbReference>
<dbReference type="InterPro" id="IPR035437">
    <property type="entry name" value="SNase_OB-fold_sf"/>
</dbReference>
<dbReference type="InterPro" id="IPR016071">
    <property type="entry name" value="Staphylococal_nuclease_OB-fold"/>
</dbReference>
<dbReference type="PANTHER" id="PTHR12302">
    <property type="entry name" value="EBNA2 BINDING PROTEIN P100"/>
    <property type="match status" value="1"/>
</dbReference>
<dbReference type="PANTHER" id="PTHR12302:SF3">
    <property type="entry name" value="SERINE_THREONINE-PROTEIN KINASE 31"/>
    <property type="match status" value="1"/>
</dbReference>
<dbReference type="Pfam" id="PF00565">
    <property type="entry name" value="SNase"/>
    <property type="match status" value="1"/>
</dbReference>
<dbReference type="SMART" id="SM00318">
    <property type="entry name" value="SNc"/>
    <property type="match status" value="1"/>
</dbReference>
<dbReference type="SUPFAM" id="SSF50199">
    <property type="entry name" value="Staphylococcal nuclease"/>
    <property type="match status" value="1"/>
</dbReference>
<dbReference type="PROSITE" id="PS50830">
    <property type="entry name" value="TNASE_3"/>
    <property type="match status" value="1"/>
</dbReference>
<feature type="chain" id="PRO_0000215285" description="Probable endonuclease LCL3">
    <location>
        <begin position="1"/>
        <end position="274"/>
    </location>
</feature>
<feature type="transmembrane region" description="Helical" evidence="1">
    <location>
        <begin position="15"/>
        <end position="32"/>
    </location>
</feature>
<feature type="domain" description="TNase-like" evidence="2">
    <location>
        <begin position="53"/>
        <end position="261"/>
    </location>
</feature>
<feature type="active site" evidence="2">
    <location>
        <position position="151"/>
    </location>
</feature>
<feature type="active site" evidence="2">
    <location>
        <position position="159"/>
    </location>
</feature>
<feature type="active site" evidence="2">
    <location>
        <position position="199"/>
    </location>
</feature>
<feature type="binding site" evidence="2">
    <location>
        <position position="156"/>
    </location>
    <ligand>
        <name>Ca(2+)</name>
        <dbReference type="ChEBI" id="CHEBI:29108"/>
    </ligand>
</feature>
<keyword id="KW-0106">Calcium</keyword>
<keyword id="KW-0255">Endonuclease</keyword>
<keyword id="KW-0378">Hydrolase</keyword>
<keyword id="KW-0472">Membrane</keyword>
<keyword id="KW-0479">Metal-binding</keyword>
<keyword id="KW-0496">Mitochondrion</keyword>
<keyword id="KW-0540">Nuclease</keyword>
<keyword id="KW-1185">Reference proteome</keyword>
<keyword id="KW-0812">Transmembrane</keyword>
<keyword id="KW-1133">Transmembrane helix</keyword>
<accession>P53153</accession>
<accession>D6VU59</accession>
<evidence type="ECO:0000255" key="1"/>
<evidence type="ECO:0000255" key="2">
    <source>
        <dbReference type="PROSITE-ProRule" id="PRU00272"/>
    </source>
</evidence>
<evidence type="ECO:0000269" key="3">
    <source>
    </source>
</evidence>
<evidence type="ECO:0000269" key="4">
    <source>
    </source>
</evidence>
<evidence type="ECO:0000269" key="5">
    <source>
    </source>
</evidence>
<evidence type="ECO:0000269" key="6">
    <source>
    </source>
</evidence>
<evidence type="ECO:0000305" key="7"/>
<reference key="1">
    <citation type="journal article" date="1997" name="Yeast">
        <title>Sequence analysis of 203 kilobases from Saccharomyces cerevisiae chromosome VII.</title>
        <authorList>
            <person name="Rieger M."/>
            <person name="Brueckner M."/>
            <person name="Schaefer M."/>
            <person name="Mueller-Auer S."/>
        </authorList>
    </citation>
    <scope>NUCLEOTIDE SEQUENCE [GENOMIC DNA]</scope>
    <source>
        <strain>ATCC 204508 / S288c</strain>
    </source>
</reference>
<reference key="2">
    <citation type="journal article" date="1997" name="Nature">
        <title>The nucleotide sequence of Saccharomyces cerevisiae chromosome VII.</title>
        <authorList>
            <person name="Tettelin H."/>
            <person name="Agostoni-Carbone M.L."/>
            <person name="Albermann K."/>
            <person name="Albers M."/>
            <person name="Arroyo J."/>
            <person name="Backes U."/>
            <person name="Barreiros T."/>
            <person name="Bertani I."/>
            <person name="Bjourson A.J."/>
            <person name="Brueckner M."/>
            <person name="Bruschi C.V."/>
            <person name="Carignani G."/>
            <person name="Castagnoli L."/>
            <person name="Cerdan E."/>
            <person name="Clemente M.L."/>
            <person name="Coblenz A."/>
            <person name="Coglievina M."/>
            <person name="Coissac E."/>
            <person name="Defoor E."/>
            <person name="Del Bino S."/>
            <person name="Delius H."/>
            <person name="Delneri D."/>
            <person name="de Wergifosse P."/>
            <person name="Dujon B."/>
            <person name="Durand P."/>
            <person name="Entian K.-D."/>
            <person name="Eraso P."/>
            <person name="Escribano V."/>
            <person name="Fabiani L."/>
            <person name="Fartmann B."/>
            <person name="Feroli F."/>
            <person name="Feuermann M."/>
            <person name="Frontali L."/>
            <person name="Garcia-Gonzalez M."/>
            <person name="Garcia-Saez M.I."/>
            <person name="Goffeau A."/>
            <person name="Guerreiro P."/>
            <person name="Hani J."/>
            <person name="Hansen M."/>
            <person name="Hebling U."/>
            <person name="Hernandez K."/>
            <person name="Heumann K."/>
            <person name="Hilger F."/>
            <person name="Hofmann B."/>
            <person name="Indge K.J."/>
            <person name="James C.M."/>
            <person name="Klima R."/>
            <person name="Koetter P."/>
            <person name="Kramer B."/>
            <person name="Kramer W."/>
            <person name="Lauquin G."/>
            <person name="Leuther H."/>
            <person name="Louis E.J."/>
            <person name="Maillier E."/>
            <person name="Marconi A."/>
            <person name="Martegani E."/>
            <person name="Mazon M.J."/>
            <person name="Mazzoni C."/>
            <person name="McReynolds A.D.K."/>
            <person name="Melchioretto P."/>
            <person name="Mewes H.-W."/>
            <person name="Minenkova O."/>
            <person name="Mueller-Auer S."/>
            <person name="Nawrocki A."/>
            <person name="Netter P."/>
            <person name="Neu R."/>
            <person name="Nombela C."/>
            <person name="Oliver S.G."/>
            <person name="Panzeri L."/>
            <person name="Paoluzi S."/>
            <person name="Plevani P."/>
            <person name="Portetelle D."/>
            <person name="Portillo F."/>
            <person name="Potier S."/>
            <person name="Purnelle B."/>
            <person name="Rieger M."/>
            <person name="Riles L."/>
            <person name="Rinaldi T."/>
            <person name="Robben J."/>
            <person name="Rodrigues-Pousada C."/>
            <person name="Rodriguez-Belmonte E."/>
            <person name="Rodriguez-Torres A.M."/>
            <person name="Rose M."/>
            <person name="Ruzzi M."/>
            <person name="Saliola M."/>
            <person name="Sanchez-Perez M."/>
            <person name="Schaefer B."/>
            <person name="Schaefer M."/>
            <person name="Scharfe M."/>
            <person name="Schmidheini T."/>
            <person name="Schreer A."/>
            <person name="Skala J."/>
            <person name="Souciet J.-L."/>
            <person name="Steensma H.Y."/>
            <person name="Talla E."/>
            <person name="Thierry A."/>
            <person name="Vandenbol M."/>
            <person name="van der Aart Q.J.M."/>
            <person name="Van Dyck L."/>
            <person name="Vanoni M."/>
            <person name="Verhasselt P."/>
            <person name="Voet M."/>
            <person name="Volckaert G."/>
            <person name="Wambutt R."/>
            <person name="Watson M.D."/>
            <person name="Weber N."/>
            <person name="Wedler E."/>
            <person name="Wedler H."/>
            <person name="Wipfli P."/>
            <person name="Wolf K."/>
            <person name="Wright L.F."/>
            <person name="Zaccaria P."/>
            <person name="Zimmermann M."/>
            <person name="Zollner A."/>
            <person name="Kleine K."/>
        </authorList>
    </citation>
    <scope>NUCLEOTIDE SEQUENCE [LARGE SCALE GENOMIC DNA]</scope>
    <source>
        <strain>ATCC 204508 / S288c</strain>
    </source>
</reference>
<reference key="3">
    <citation type="journal article" date="2014" name="G3 (Bethesda)">
        <title>The reference genome sequence of Saccharomyces cerevisiae: Then and now.</title>
        <authorList>
            <person name="Engel S.R."/>
            <person name="Dietrich F.S."/>
            <person name="Fisk D.G."/>
            <person name="Binkley G."/>
            <person name="Balakrishnan R."/>
            <person name="Costanzo M.C."/>
            <person name="Dwight S.S."/>
            <person name="Hitz B.C."/>
            <person name="Karra K."/>
            <person name="Nash R.S."/>
            <person name="Weng S."/>
            <person name="Wong E.D."/>
            <person name="Lloyd P."/>
            <person name="Skrzypek M.S."/>
            <person name="Miyasato S.R."/>
            <person name="Simison M."/>
            <person name="Cherry J.M."/>
        </authorList>
    </citation>
    <scope>GENOME REANNOTATION</scope>
    <source>
        <strain>ATCC 204508 / S288c</strain>
    </source>
</reference>
<reference key="4">
    <citation type="journal article" date="2003" name="Nature">
        <title>Global analysis of protein localization in budding yeast.</title>
        <authorList>
            <person name="Huh W.-K."/>
            <person name="Falvo J.V."/>
            <person name="Gerke L.C."/>
            <person name="Carroll A.S."/>
            <person name="Howson R.W."/>
            <person name="Weissman J.S."/>
            <person name="O'Shea E.K."/>
        </authorList>
    </citation>
    <scope>SUBCELLULAR LOCATION [LARGE SCALE ANALYSIS]</scope>
</reference>
<reference key="5">
    <citation type="journal article" date="2003" name="Nature">
        <title>Global analysis of protein expression in yeast.</title>
        <authorList>
            <person name="Ghaemmaghami S."/>
            <person name="Huh W.-K."/>
            <person name="Bower K."/>
            <person name="Howson R.W."/>
            <person name="Belle A."/>
            <person name="Dephoure N."/>
            <person name="O'Shea E.K."/>
            <person name="Weissman J.S."/>
        </authorList>
    </citation>
    <scope>LEVEL OF PROTEIN EXPRESSION [LARGE SCALE ANALYSIS]</scope>
</reference>
<reference key="6">
    <citation type="journal article" date="2010" name="PLoS Genet.">
        <title>A microarray-based genetic screen for yeast chronological aging factors.</title>
        <authorList>
            <person name="Matecic M."/>
            <person name="Smith D.L."/>
            <person name="Pan X."/>
            <person name="Maqani N."/>
            <person name="Bekiranov S."/>
            <person name="Boeke J.D."/>
            <person name="Smith J.S."/>
        </authorList>
    </citation>
    <scope>DISRUPTION PHENOTYPE</scope>
</reference>
<reference key="7">
    <citation type="journal article" date="2007" name="Yeast">
        <title>Global protein expression profiling of budding yeast in response to DNA damage.</title>
        <authorList>
            <person name="Lee M.-W."/>
            <person name="Kim B.-J."/>
            <person name="Choi H.-K."/>
            <person name="Ryu M.-J."/>
            <person name="Kim S.-B."/>
            <person name="Kang K.-M."/>
            <person name="Cho E.-J."/>
            <person name="Youn H.-D."/>
            <person name="Huh W.-K."/>
            <person name="Kim S.-T."/>
        </authorList>
    </citation>
    <scope>INDUCTION</scope>
</reference>
<gene>
    <name type="primary">LCL3</name>
    <name type="ordered locus">YGL085W</name>
</gene>
<comment type="interaction">
    <interactant intactId="EBI-23857">
        <id>P53153</id>
    </interactant>
    <interactant intactId="EBI-18140">
        <id>P40073</id>
        <label>SHO1</label>
    </interactant>
    <organismsDiffer>false</organismsDiffer>
    <experiments>2</experiments>
</comment>
<comment type="subcellular location">
    <subcellularLocation>
        <location evidence="3">Mitochondrion</location>
    </subcellularLocation>
    <subcellularLocation>
        <location evidence="7">Membrane</location>
        <topology evidence="7">Single-pass membrane protein</topology>
    </subcellularLocation>
</comment>
<comment type="induction">
    <text evidence="5">By DNA-damaging agent methyl methanesulphonate (MMS) (at protein level).</text>
</comment>
<comment type="disruption phenotype">
    <text evidence="6">Leads to long chronological lifespan.</text>
</comment>
<comment type="miscellaneous">
    <text evidence="4">Present with 704 molecules/cell in log phase SD medium.</text>
</comment>
<comment type="similarity">
    <text evidence="7">Belongs to the LCL3 family.</text>
</comment>
<name>LCL3_YEAST</name>